<reference key="1">
    <citation type="journal article" date="1997" name="Curr. Microbiol.">
        <title>The (F1F0) ATP synthase of Buchnera aphidicola (endosymbiont of aphids): genetic analysis of the putative ATP operon.</title>
        <authorList>
            <person name="Clark M.A."/>
            <person name="Baumann P."/>
        </authorList>
    </citation>
    <scope>NUCLEOTIDE SEQUENCE [GENOMIC DNA]</scope>
</reference>
<reference key="2">
    <citation type="journal article" date="1998" name="Curr. Microbiol.">
        <title>Sequence analysis of a 34.7-kb DNA segment from the genome of Buchnera aphidicola (endosymbiont of aphids) containing groEL, dnaA, the atp operon, gidA, and rho.</title>
        <authorList>
            <person name="Clark M.A."/>
            <person name="Baumann L."/>
            <person name="Baumann P."/>
        </authorList>
    </citation>
    <scope>NUCLEOTIDE SEQUENCE [GENOMIC DNA]</scope>
</reference>
<reference key="3">
    <citation type="journal article" date="2002" name="Science">
        <title>50 million years of genomic stasis in endosymbiotic bacteria.</title>
        <authorList>
            <person name="Tamas I."/>
            <person name="Klasson L."/>
            <person name="Canbaeck B."/>
            <person name="Naeslund A.K."/>
            <person name="Eriksson A.-S."/>
            <person name="Wernegreen J.J."/>
            <person name="Sandstroem J.P."/>
            <person name="Moran N.A."/>
            <person name="Andersson S.G.E."/>
        </authorList>
    </citation>
    <scope>NUCLEOTIDE SEQUENCE [LARGE SCALE GENOMIC DNA]</scope>
    <source>
        <strain>Sg</strain>
    </source>
</reference>
<dbReference type="EMBL" id="AF008210">
    <property type="protein sequence ID" value="AAC38114.1"/>
    <property type="molecule type" value="Genomic_DNA"/>
</dbReference>
<dbReference type="EMBL" id="AE013218">
    <property type="protein sequence ID" value="AAM67576.1"/>
    <property type="molecule type" value="Genomic_DNA"/>
</dbReference>
<dbReference type="RefSeq" id="WP_011053542.1">
    <property type="nucleotide sequence ID" value="NC_004061.1"/>
</dbReference>
<dbReference type="SMR" id="O51876"/>
<dbReference type="STRING" id="198804.BUsg_004"/>
<dbReference type="GeneID" id="93003466"/>
<dbReference type="KEGG" id="bas:BUsg_004"/>
<dbReference type="eggNOG" id="COG0711">
    <property type="taxonomic scope" value="Bacteria"/>
</dbReference>
<dbReference type="HOGENOM" id="CLU_079215_4_5_6"/>
<dbReference type="Proteomes" id="UP000000416">
    <property type="component" value="Chromosome"/>
</dbReference>
<dbReference type="GO" id="GO:0005886">
    <property type="term" value="C:plasma membrane"/>
    <property type="evidence" value="ECO:0007669"/>
    <property type="project" value="UniProtKB-SubCell"/>
</dbReference>
<dbReference type="GO" id="GO:0045259">
    <property type="term" value="C:proton-transporting ATP synthase complex"/>
    <property type="evidence" value="ECO:0007669"/>
    <property type="project" value="UniProtKB-KW"/>
</dbReference>
<dbReference type="GO" id="GO:0046933">
    <property type="term" value="F:proton-transporting ATP synthase activity, rotational mechanism"/>
    <property type="evidence" value="ECO:0007669"/>
    <property type="project" value="UniProtKB-UniRule"/>
</dbReference>
<dbReference type="GO" id="GO:0046961">
    <property type="term" value="F:proton-transporting ATPase activity, rotational mechanism"/>
    <property type="evidence" value="ECO:0007669"/>
    <property type="project" value="TreeGrafter"/>
</dbReference>
<dbReference type="CDD" id="cd06503">
    <property type="entry name" value="ATP-synt_Fo_b"/>
    <property type="match status" value="1"/>
</dbReference>
<dbReference type="Gene3D" id="6.10.250.1580">
    <property type="match status" value="1"/>
</dbReference>
<dbReference type="HAMAP" id="MF_01398">
    <property type="entry name" value="ATP_synth_b_bprime"/>
    <property type="match status" value="1"/>
</dbReference>
<dbReference type="InterPro" id="IPR028987">
    <property type="entry name" value="ATP_synth_B-like_membr_sf"/>
</dbReference>
<dbReference type="InterPro" id="IPR002146">
    <property type="entry name" value="ATP_synth_b/b'su_bac/chlpt"/>
</dbReference>
<dbReference type="InterPro" id="IPR005864">
    <property type="entry name" value="ATP_synth_F0_bsu_bac"/>
</dbReference>
<dbReference type="InterPro" id="IPR050059">
    <property type="entry name" value="ATP_synthase_B_chain"/>
</dbReference>
<dbReference type="NCBIfam" id="TIGR01144">
    <property type="entry name" value="ATP_synt_b"/>
    <property type="match status" value="1"/>
</dbReference>
<dbReference type="NCBIfam" id="NF004411">
    <property type="entry name" value="PRK05759.1-2"/>
    <property type="match status" value="1"/>
</dbReference>
<dbReference type="PANTHER" id="PTHR33445:SF1">
    <property type="entry name" value="ATP SYNTHASE SUBUNIT B"/>
    <property type="match status" value="1"/>
</dbReference>
<dbReference type="PANTHER" id="PTHR33445">
    <property type="entry name" value="ATP SYNTHASE SUBUNIT B', CHLOROPLASTIC"/>
    <property type="match status" value="1"/>
</dbReference>
<dbReference type="Pfam" id="PF00430">
    <property type="entry name" value="ATP-synt_B"/>
    <property type="match status" value="1"/>
</dbReference>
<dbReference type="SUPFAM" id="SSF81573">
    <property type="entry name" value="F1F0 ATP synthase subunit B, membrane domain"/>
    <property type="match status" value="1"/>
</dbReference>
<gene>
    <name evidence="1" type="primary">atpF</name>
    <name type="ordered locus">BUsg_004</name>
</gene>
<keyword id="KW-0066">ATP synthesis</keyword>
<keyword id="KW-1003">Cell membrane</keyword>
<keyword id="KW-0138">CF(0)</keyword>
<keyword id="KW-0375">Hydrogen ion transport</keyword>
<keyword id="KW-0406">Ion transport</keyword>
<keyword id="KW-0472">Membrane</keyword>
<keyword id="KW-0812">Transmembrane</keyword>
<keyword id="KW-1133">Transmembrane helix</keyword>
<keyword id="KW-0813">Transport</keyword>
<evidence type="ECO:0000255" key="1">
    <source>
        <dbReference type="HAMAP-Rule" id="MF_01398"/>
    </source>
</evidence>
<evidence type="ECO:0000305" key="2"/>
<name>ATPF_BUCAP</name>
<feature type="chain" id="PRO_0000082368" description="ATP synthase subunit b">
    <location>
        <begin position="1"/>
        <end position="163"/>
    </location>
</feature>
<feature type="transmembrane region" description="Helical" evidence="1">
    <location>
        <begin position="13"/>
        <end position="33"/>
    </location>
</feature>
<feature type="sequence conflict" description="In Ref. 1; no nucleotide entry and 2; AAC38114." evidence="2" ref="1 2">
    <original>LSKDKKLI</original>
    <variation>FI</variation>
    <location>
        <begin position="156"/>
        <end position="163"/>
    </location>
</feature>
<comment type="function">
    <text evidence="1">F(1)F(0) ATP synthase produces ATP from ADP in the presence of a proton or sodium gradient. F-type ATPases consist of two structural domains, F(1) containing the extramembraneous catalytic core and F(0) containing the membrane proton channel, linked together by a central stalk and a peripheral stalk. During catalysis, ATP synthesis in the catalytic domain of F(1) is coupled via a rotary mechanism of the central stalk subunits to proton translocation.</text>
</comment>
<comment type="function">
    <text evidence="1">Component of the F(0) channel, it forms part of the peripheral stalk, linking F(1) to F(0).</text>
</comment>
<comment type="subunit">
    <text evidence="1">F-type ATPases have 2 components, F(1) - the catalytic core - and F(0) - the membrane proton channel. F(1) has five subunits: alpha(3), beta(3), gamma(1), delta(1), epsilon(1). F(0) has three main subunits: a(1), b(2) and c(10-14). The alpha and beta chains form an alternating ring which encloses part of the gamma chain. F(1) is attached to F(0) by a central stalk formed by the gamma and epsilon chains, while a peripheral stalk is formed by the delta and b chains.</text>
</comment>
<comment type="subcellular location">
    <subcellularLocation>
        <location evidence="1">Cell membrane</location>
        <topology evidence="1">Single-pass membrane protein</topology>
    </subcellularLocation>
</comment>
<comment type="similarity">
    <text evidence="1">Belongs to the ATPase B chain family.</text>
</comment>
<accession>O51876</accession>
<protein>
    <recommendedName>
        <fullName evidence="1">ATP synthase subunit b</fullName>
    </recommendedName>
    <alternativeName>
        <fullName evidence="1">ATP synthase F(0) sector subunit b</fullName>
    </alternativeName>
    <alternativeName>
        <fullName evidence="1">ATPase subunit I</fullName>
    </alternativeName>
    <alternativeName>
        <fullName evidence="1">F-type ATPase subunit b</fullName>
        <shortName evidence="1">F-ATPase subunit b</shortName>
    </alternativeName>
</protein>
<proteinExistence type="inferred from homology"/>
<sequence length="163" mass="19075">MNLNATILGQALSFILFVWFCMKYIWPPIIFAIETRQKNIEESLISLKKAEEELIIIQKKMNQIIQDSKEKASFIINEANKKKSIILEDAKSIALEESKKIFLRNQLEIDLKVMQVRKNLHKEIVDLSILIAEKIIKDNIQKDQYKYSIKKLIVSLSKDKKLI</sequence>
<organism>
    <name type="scientific">Buchnera aphidicola subsp. Schizaphis graminum (strain Sg)</name>
    <dbReference type="NCBI Taxonomy" id="198804"/>
    <lineage>
        <taxon>Bacteria</taxon>
        <taxon>Pseudomonadati</taxon>
        <taxon>Pseudomonadota</taxon>
        <taxon>Gammaproteobacteria</taxon>
        <taxon>Enterobacterales</taxon>
        <taxon>Erwiniaceae</taxon>
        <taxon>Buchnera</taxon>
    </lineage>
</organism>